<comment type="function">
    <text evidence="1">Multifunctional regulator of fatty acid metabolism.</text>
</comment>
<comment type="subunit">
    <text evidence="1">Homodimer.</text>
</comment>
<comment type="subcellular location">
    <subcellularLocation>
        <location evidence="1">Cytoplasm</location>
    </subcellularLocation>
</comment>
<evidence type="ECO:0000255" key="1">
    <source>
        <dbReference type="HAMAP-Rule" id="MF_00696"/>
    </source>
</evidence>
<feature type="chain" id="PRO_0000050629" description="Fatty acid metabolism regulator protein">
    <location>
        <begin position="1"/>
        <end position="241"/>
    </location>
</feature>
<feature type="domain" description="HTH gntR-type" evidence="1">
    <location>
        <begin position="11"/>
        <end position="79"/>
    </location>
</feature>
<feature type="DNA-binding region" description="H-T-H motif" evidence="1">
    <location>
        <begin position="39"/>
        <end position="58"/>
    </location>
</feature>
<name>FADR_HAEIN</name>
<keyword id="KW-0010">Activator</keyword>
<keyword id="KW-0963">Cytoplasm</keyword>
<keyword id="KW-0238">DNA-binding</keyword>
<keyword id="KW-0276">Fatty acid metabolism</keyword>
<keyword id="KW-0443">Lipid metabolism</keyword>
<keyword id="KW-1185">Reference proteome</keyword>
<keyword id="KW-0678">Repressor</keyword>
<keyword id="KW-0804">Transcription</keyword>
<keyword id="KW-0805">Transcription regulation</keyword>
<protein>
    <recommendedName>
        <fullName evidence="1">Fatty acid metabolism regulator protein</fullName>
    </recommendedName>
</protein>
<gene>
    <name evidence="1" type="primary">fadR</name>
    <name type="ordered locus">HI_0426</name>
</gene>
<organism>
    <name type="scientific">Haemophilus influenzae (strain ATCC 51907 / DSM 11121 / KW20 / Rd)</name>
    <dbReference type="NCBI Taxonomy" id="71421"/>
    <lineage>
        <taxon>Bacteria</taxon>
        <taxon>Pseudomonadati</taxon>
        <taxon>Pseudomonadota</taxon>
        <taxon>Gammaproteobacteria</taxon>
        <taxon>Pasteurellales</taxon>
        <taxon>Pasteurellaceae</taxon>
        <taxon>Haemophilus</taxon>
    </lineage>
</organism>
<sequence>MQNNNDILKAQSPAALAEEYIVKSIWQDVFPAGSNLPSERDLADKIGVTRTTLREVLQRLARDGWLTIQHGKPTKVNNIWDAAGPNIIETLIALDMQSAPLIIDNMLSLRSKMSESYIYEAVKNSPQKSTALFAELEQLQNTAQDYTEFDYQLFRQFTVVANKPFYRLIFNSLKGVYQRIGLLFFKEKKHRELTKQFYLEMQQICLEGNADAVVDCIRKHNLRSSTYWKAILERLPQNLSD</sequence>
<proteinExistence type="inferred from homology"/>
<accession>P44705</accession>
<dbReference type="EMBL" id="L42023">
    <property type="protein sequence ID" value="AAC22085.1"/>
    <property type="molecule type" value="Genomic_DNA"/>
</dbReference>
<dbReference type="PIR" id="A64067">
    <property type="entry name" value="A64067"/>
</dbReference>
<dbReference type="RefSeq" id="NP_438587.1">
    <property type="nucleotide sequence ID" value="NC_000907.1"/>
</dbReference>
<dbReference type="SMR" id="P44705"/>
<dbReference type="STRING" id="71421.HI_0426"/>
<dbReference type="EnsemblBacteria" id="AAC22085">
    <property type="protein sequence ID" value="AAC22085"/>
    <property type="gene ID" value="HI_0426"/>
</dbReference>
<dbReference type="KEGG" id="hin:HI_0426"/>
<dbReference type="PATRIC" id="fig|71421.8.peg.446"/>
<dbReference type="eggNOG" id="COG2186">
    <property type="taxonomic scope" value="Bacteria"/>
</dbReference>
<dbReference type="HOGENOM" id="CLU_017584_9_4_6"/>
<dbReference type="OrthoDB" id="5683977at2"/>
<dbReference type="PhylomeDB" id="P44705"/>
<dbReference type="BioCyc" id="HINF71421:G1GJ1-441-MONOMER"/>
<dbReference type="Proteomes" id="UP000000579">
    <property type="component" value="Chromosome"/>
</dbReference>
<dbReference type="GO" id="GO:0005737">
    <property type="term" value="C:cytoplasm"/>
    <property type="evidence" value="ECO:0007669"/>
    <property type="project" value="UniProtKB-SubCell"/>
</dbReference>
<dbReference type="GO" id="GO:0003677">
    <property type="term" value="F:DNA binding"/>
    <property type="evidence" value="ECO:0007669"/>
    <property type="project" value="UniProtKB-KW"/>
</dbReference>
<dbReference type="GO" id="GO:0003700">
    <property type="term" value="F:DNA-binding transcription factor activity"/>
    <property type="evidence" value="ECO:0007669"/>
    <property type="project" value="UniProtKB-UniRule"/>
</dbReference>
<dbReference type="GO" id="GO:0000062">
    <property type="term" value="F:fatty-acyl-CoA binding"/>
    <property type="evidence" value="ECO:0007669"/>
    <property type="project" value="InterPro"/>
</dbReference>
<dbReference type="GO" id="GO:0006631">
    <property type="term" value="P:fatty acid metabolic process"/>
    <property type="evidence" value="ECO:0007669"/>
    <property type="project" value="UniProtKB-KW"/>
</dbReference>
<dbReference type="GO" id="GO:0019217">
    <property type="term" value="P:regulation of fatty acid metabolic process"/>
    <property type="evidence" value="ECO:0007669"/>
    <property type="project" value="UniProtKB-UniRule"/>
</dbReference>
<dbReference type="CDD" id="cd07377">
    <property type="entry name" value="WHTH_GntR"/>
    <property type="match status" value="1"/>
</dbReference>
<dbReference type="Gene3D" id="1.20.120.530">
    <property type="entry name" value="GntR ligand-binding domain-like"/>
    <property type="match status" value="1"/>
</dbReference>
<dbReference type="Gene3D" id="1.10.10.10">
    <property type="entry name" value="Winged helix-like DNA-binding domain superfamily/Winged helix DNA-binding domain"/>
    <property type="match status" value="1"/>
</dbReference>
<dbReference type="HAMAP" id="MF_00696">
    <property type="entry name" value="HTH_FadR"/>
    <property type="match status" value="1"/>
</dbReference>
<dbReference type="InterPro" id="IPR014178">
    <property type="entry name" value="FA-response_TF_FadR"/>
</dbReference>
<dbReference type="InterPro" id="IPR028374">
    <property type="entry name" value="FadR_C"/>
</dbReference>
<dbReference type="InterPro" id="IPR008920">
    <property type="entry name" value="TF_FadR/GntR_C"/>
</dbReference>
<dbReference type="InterPro" id="IPR000524">
    <property type="entry name" value="Tscrpt_reg_HTH_GntR"/>
</dbReference>
<dbReference type="InterPro" id="IPR036388">
    <property type="entry name" value="WH-like_DNA-bd_sf"/>
</dbReference>
<dbReference type="InterPro" id="IPR036390">
    <property type="entry name" value="WH_DNA-bd_sf"/>
</dbReference>
<dbReference type="NCBIfam" id="TIGR02812">
    <property type="entry name" value="fadR_gamma"/>
    <property type="match status" value="1"/>
</dbReference>
<dbReference type="NCBIfam" id="NF003444">
    <property type="entry name" value="PRK04984.1"/>
    <property type="match status" value="1"/>
</dbReference>
<dbReference type="PANTHER" id="PTHR43537:SF52">
    <property type="entry name" value="FATTY ACID METABOLISM REGULATOR PROTEIN"/>
    <property type="match status" value="1"/>
</dbReference>
<dbReference type="PANTHER" id="PTHR43537">
    <property type="entry name" value="TRANSCRIPTIONAL REGULATOR, GNTR FAMILY"/>
    <property type="match status" value="1"/>
</dbReference>
<dbReference type="Pfam" id="PF07840">
    <property type="entry name" value="FadR_C"/>
    <property type="match status" value="1"/>
</dbReference>
<dbReference type="Pfam" id="PF00392">
    <property type="entry name" value="GntR"/>
    <property type="match status" value="1"/>
</dbReference>
<dbReference type="PRINTS" id="PR00035">
    <property type="entry name" value="HTHGNTR"/>
</dbReference>
<dbReference type="SMART" id="SM00345">
    <property type="entry name" value="HTH_GNTR"/>
    <property type="match status" value="1"/>
</dbReference>
<dbReference type="SUPFAM" id="SSF48008">
    <property type="entry name" value="GntR ligand-binding domain-like"/>
    <property type="match status" value="1"/>
</dbReference>
<dbReference type="SUPFAM" id="SSF46785">
    <property type="entry name" value="Winged helix' DNA-binding domain"/>
    <property type="match status" value="1"/>
</dbReference>
<dbReference type="PROSITE" id="PS50949">
    <property type="entry name" value="HTH_GNTR"/>
    <property type="match status" value="1"/>
</dbReference>
<reference key="1">
    <citation type="journal article" date="1995" name="Science">
        <title>Whole-genome random sequencing and assembly of Haemophilus influenzae Rd.</title>
        <authorList>
            <person name="Fleischmann R.D."/>
            <person name="Adams M.D."/>
            <person name="White O."/>
            <person name="Clayton R.A."/>
            <person name="Kirkness E.F."/>
            <person name="Kerlavage A.R."/>
            <person name="Bult C.J."/>
            <person name="Tomb J.-F."/>
            <person name="Dougherty B.A."/>
            <person name="Merrick J.M."/>
            <person name="McKenney K."/>
            <person name="Sutton G.G."/>
            <person name="FitzHugh W."/>
            <person name="Fields C.A."/>
            <person name="Gocayne J.D."/>
            <person name="Scott J.D."/>
            <person name="Shirley R."/>
            <person name="Liu L.-I."/>
            <person name="Glodek A."/>
            <person name="Kelley J.M."/>
            <person name="Weidman J.F."/>
            <person name="Phillips C.A."/>
            <person name="Spriggs T."/>
            <person name="Hedblom E."/>
            <person name="Cotton M.D."/>
            <person name="Utterback T.R."/>
            <person name="Hanna M.C."/>
            <person name="Nguyen D.T."/>
            <person name="Saudek D.M."/>
            <person name="Brandon R.C."/>
            <person name="Fine L.D."/>
            <person name="Fritchman J.L."/>
            <person name="Fuhrmann J.L."/>
            <person name="Geoghagen N.S.M."/>
            <person name="Gnehm C.L."/>
            <person name="McDonald L.A."/>
            <person name="Small K.V."/>
            <person name="Fraser C.M."/>
            <person name="Smith H.O."/>
            <person name="Venter J.C."/>
        </authorList>
    </citation>
    <scope>NUCLEOTIDE SEQUENCE [LARGE SCALE GENOMIC DNA]</scope>
    <source>
        <strain>ATCC 51907 / DSM 11121 / KW20 / Rd</strain>
    </source>
</reference>